<name>TVB5_MOUSE</name>
<protein>
    <recommendedName>
        <fullName>T-cell receptor beta chain V region C5</fullName>
    </recommendedName>
</protein>
<proteinExistence type="evidence at protein level"/>
<accession>P04213</accession>
<reference key="1">
    <citation type="journal article" date="1984" name="Nature">
        <title>Structure, expression and divergence of T-cell receptor beta-chain variable regions.</title>
        <authorList>
            <person name="Patten P."/>
            <person name="Yokota T."/>
            <person name="Rothbard J."/>
            <person name="Chien Y."/>
            <person name="Arai K."/>
            <person name="Davis M.M."/>
        </authorList>
    </citation>
    <scope>NUCLEOTIDE SEQUENCE</scope>
</reference>
<keyword id="KW-0002">3D-structure</keyword>
<keyword id="KW-1064">Adaptive immunity</keyword>
<keyword id="KW-1015">Disulfide bond</keyword>
<keyword id="KW-0391">Immunity</keyword>
<keyword id="KW-0393">Immunoglobulin domain</keyword>
<keyword id="KW-0675">Receptor</keyword>
<keyword id="KW-1185">Reference proteome</keyword>
<keyword id="KW-0732">Signal</keyword>
<keyword id="KW-1279">T cell receptor</keyword>
<sequence length="122" mass="13349">ILLCAKHMEAAVTQSPRSKVAVTGGKVTLSCHQTNNHDYMYWYRQDTGHGLRLIHYSYVADSTEKGDIPDGYKASRPSQENFSLILELASLSQTAVYFCASSGTGGALDTQYFGPGTRLLVL</sequence>
<organism>
    <name type="scientific">Mus musculus</name>
    <name type="common">Mouse</name>
    <dbReference type="NCBI Taxonomy" id="10090"/>
    <lineage>
        <taxon>Eukaryota</taxon>
        <taxon>Metazoa</taxon>
        <taxon>Chordata</taxon>
        <taxon>Craniata</taxon>
        <taxon>Vertebrata</taxon>
        <taxon>Euteleostomi</taxon>
        <taxon>Mammalia</taxon>
        <taxon>Eutheria</taxon>
        <taxon>Euarchontoglires</taxon>
        <taxon>Glires</taxon>
        <taxon>Rodentia</taxon>
        <taxon>Myomorpha</taxon>
        <taxon>Muroidea</taxon>
        <taxon>Muridae</taxon>
        <taxon>Murinae</taxon>
        <taxon>Mus</taxon>
        <taxon>Mus</taxon>
    </lineage>
</organism>
<feature type="signal peptide">
    <location>
        <begin position="1" status="less than"/>
        <end position="7"/>
    </location>
</feature>
<feature type="chain" id="PRO_0000033603" description="T-cell receptor beta chain V region C5">
    <location>
        <begin position="8"/>
        <end position="122"/>
    </location>
</feature>
<feature type="region of interest" description="V segment">
    <location>
        <begin position="8"/>
        <end position="103"/>
    </location>
</feature>
<feature type="region of interest" description="D segment">
    <location>
        <begin position="104"/>
        <end position="108"/>
    </location>
</feature>
<feature type="region of interest" description="J segment">
    <location>
        <begin position="109"/>
        <end position="122"/>
    </location>
</feature>
<feature type="disulfide bond" evidence="1">
    <location>
        <begin position="31"/>
        <end position="99"/>
    </location>
</feature>
<feature type="non-terminal residue">
    <location>
        <position position="1"/>
    </location>
</feature>
<feature type="non-terminal residue">
    <location>
        <position position="122"/>
    </location>
</feature>
<feature type="strand" evidence="5">
    <location>
        <begin position="12"/>
        <end position="15"/>
    </location>
</feature>
<feature type="strand" evidence="5">
    <location>
        <begin position="17"/>
        <end position="22"/>
    </location>
</feature>
<feature type="strand" evidence="5">
    <location>
        <begin position="27"/>
        <end position="33"/>
    </location>
</feature>
<feature type="strand" evidence="5">
    <location>
        <begin position="38"/>
        <end position="46"/>
    </location>
</feature>
<feature type="strand" evidence="5">
    <location>
        <begin position="49"/>
        <end position="59"/>
    </location>
</feature>
<feature type="strand" evidence="4">
    <location>
        <begin position="62"/>
        <end position="65"/>
    </location>
</feature>
<feature type="strand" evidence="5">
    <location>
        <begin position="73"/>
        <end position="75"/>
    </location>
</feature>
<feature type="strand" evidence="5">
    <location>
        <begin position="78"/>
        <end position="88"/>
    </location>
</feature>
<feature type="helix" evidence="5">
    <location>
        <begin position="91"/>
        <end position="93"/>
    </location>
</feature>
<feature type="strand" evidence="5">
    <location>
        <begin position="95"/>
        <end position="102"/>
    </location>
</feature>
<feature type="strand" evidence="2">
    <location>
        <begin position="104"/>
        <end position="108"/>
    </location>
</feature>
<feature type="strand" evidence="2">
    <location>
        <begin position="111"/>
        <end position="113"/>
    </location>
</feature>
<feature type="strand" evidence="3">
    <location>
        <begin position="117"/>
        <end position="121"/>
    </location>
</feature>
<comment type="miscellaneous">
    <text>This sequence was derived from a T-helper clone.</text>
</comment>
<evidence type="ECO:0000255" key="1">
    <source>
        <dbReference type="PROSITE-ProRule" id="PRU00114"/>
    </source>
</evidence>
<evidence type="ECO:0007829" key="2">
    <source>
        <dbReference type="PDB" id="1U3H"/>
    </source>
</evidence>
<evidence type="ECO:0007829" key="3">
    <source>
        <dbReference type="PDB" id="2AQ2"/>
    </source>
</evidence>
<evidence type="ECO:0007829" key="4">
    <source>
        <dbReference type="PDB" id="5M00"/>
    </source>
</evidence>
<evidence type="ECO:0007829" key="5">
    <source>
        <dbReference type="PDB" id="5M02"/>
    </source>
</evidence>
<dbReference type="PIR" id="A02008">
    <property type="entry name" value="RWMSC5"/>
</dbReference>
<dbReference type="PDB" id="1D9K">
    <property type="method" value="X-ray"/>
    <property type="resolution" value="3.20 A"/>
    <property type="chains" value="B/F=11-122"/>
</dbReference>
<dbReference type="PDB" id="1LP9">
    <property type="method" value="X-ray"/>
    <property type="resolution" value="2.00 A"/>
    <property type="chains" value="F/M=8-122"/>
</dbReference>
<dbReference type="PDB" id="1U3H">
    <property type="method" value="X-ray"/>
    <property type="resolution" value="2.42 A"/>
    <property type="chains" value="B/F=11-122"/>
</dbReference>
<dbReference type="PDB" id="2APB">
    <property type="method" value="X-ray"/>
    <property type="resolution" value="1.80 A"/>
    <property type="chains" value="A=9-122"/>
</dbReference>
<dbReference type="PDB" id="2APF">
    <property type="method" value="X-ray"/>
    <property type="resolution" value="1.80 A"/>
    <property type="chains" value="A=9-122"/>
</dbReference>
<dbReference type="PDB" id="2APT">
    <property type="method" value="X-ray"/>
    <property type="resolution" value="2.00 A"/>
    <property type="chains" value="A/B=9-106"/>
</dbReference>
<dbReference type="PDB" id="2APV">
    <property type="method" value="X-ray"/>
    <property type="resolution" value="1.90 A"/>
    <property type="chains" value="A=9-106"/>
</dbReference>
<dbReference type="PDB" id="2APW">
    <property type="method" value="X-ray"/>
    <property type="resolution" value="2.00 A"/>
    <property type="chains" value="A=9-106"/>
</dbReference>
<dbReference type="PDB" id="2APX">
    <property type="method" value="X-ray"/>
    <property type="resolution" value="1.80 A"/>
    <property type="chains" value="A=9-106"/>
</dbReference>
<dbReference type="PDB" id="2AQ1">
    <property type="method" value="X-ray"/>
    <property type="resolution" value="2.10 A"/>
    <property type="chains" value="A/C/E/G=9-122"/>
</dbReference>
<dbReference type="PDB" id="2AQ2">
    <property type="method" value="X-ray"/>
    <property type="resolution" value="1.80 A"/>
    <property type="chains" value="A=9-122"/>
</dbReference>
<dbReference type="PDB" id="2AQ3">
    <property type="method" value="X-ray"/>
    <property type="resolution" value="2.30 A"/>
    <property type="chains" value="A/C/E/G=9-122"/>
</dbReference>
<dbReference type="PDB" id="2J8U">
    <property type="method" value="X-ray"/>
    <property type="resolution" value="2.88 A"/>
    <property type="chains" value="F/M=8-122"/>
</dbReference>
<dbReference type="PDB" id="2UWE">
    <property type="method" value="X-ray"/>
    <property type="resolution" value="2.40 A"/>
    <property type="chains" value="F/M=8-122"/>
</dbReference>
<dbReference type="PDB" id="4NHU">
    <property type="method" value="X-ray"/>
    <property type="resolution" value="2.90 A"/>
    <property type="chains" value="B/D=9-101"/>
</dbReference>
<dbReference type="PDB" id="5M00">
    <property type="method" value="X-ray"/>
    <property type="resolution" value="1.95 A"/>
    <property type="chains" value="H=11-102"/>
</dbReference>
<dbReference type="PDB" id="5M01">
    <property type="method" value="X-ray"/>
    <property type="resolution" value="1.95 A"/>
    <property type="chains" value="H=11-102"/>
</dbReference>
<dbReference type="PDB" id="5M02">
    <property type="method" value="X-ray"/>
    <property type="resolution" value="1.75 A"/>
    <property type="chains" value="H=11-102"/>
</dbReference>
<dbReference type="PDB" id="5WLG">
    <property type="method" value="X-ray"/>
    <property type="resolution" value="2.10 A"/>
    <property type="chains" value="E/J=9-102"/>
</dbReference>
<dbReference type="PDB" id="6G9Q">
    <property type="method" value="X-ray"/>
    <property type="resolution" value="1.89 A"/>
    <property type="chains" value="H=11-122"/>
</dbReference>
<dbReference type="PDBsum" id="1D9K"/>
<dbReference type="PDBsum" id="1LP9"/>
<dbReference type="PDBsum" id="1U3H"/>
<dbReference type="PDBsum" id="2APB"/>
<dbReference type="PDBsum" id="2APF"/>
<dbReference type="PDBsum" id="2APT"/>
<dbReference type="PDBsum" id="2APV"/>
<dbReference type="PDBsum" id="2APW"/>
<dbReference type="PDBsum" id="2APX"/>
<dbReference type="PDBsum" id="2AQ1"/>
<dbReference type="PDBsum" id="2AQ2"/>
<dbReference type="PDBsum" id="2AQ3"/>
<dbReference type="PDBsum" id="2J8U"/>
<dbReference type="PDBsum" id="2UWE"/>
<dbReference type="PDBsum" id="4NHU"/>
<dbReference type="PDBsum" id="5M00"/>
<dbReference type="PDBsum" id="5M01"/>
<dbReference type="PDBsum" id="5M02"/>
<dbReference type="PDBsum" id="5WLG"/>
<dbReference type="PDBsum" id="6G9Q"/>
<dbReference type="SMR" id="P04213"/>
<dbReference type="FunCoup" id="P04213">
    <property type="interactions" value="1151"/>
</dbReference>
<dbReference type="IntAct" id="P04213">
    <property type="interactions" value="1"/>
</dbReference>
<dbReference type="iPTMnet" id="P04213"/>
<dbReference type="PhosphoSitePlus" id="P04213"/>
<dbReference type="UCSC" id="uc009boc.2">
    <property type="organism name" value="mouse"/>
</dbReference>
<dbReference type="InParanoid" id="P04213"/>
<dbReference type="EvolutionaryTrace" id="P04213"/>
<dbReference type="Proteomes" id="UP000000589">
    <property type="component" value="Unplaced"/>
</dbReference>
<dbReference type="RNAct" id="P04213">
    <property type="molecule type" value="protein"/>
</dbReference>
<dbReference type="GO" id="GO:0005886">
    <property type="term" value="C:plasma membrane"/>
    <property type="evidence" value="ECO:0000318"/>
    <property type="project" value="GO_Central"/>
</dbReference>
<dbReference type="GO" id="GO:0042101">
    <property type="term" value="C:T cell receptor complex"/>
    <property type="evidence" value="ECO:0007669"/>
    <property type="project" value="UniProtKB-KW"/>
</dbReference>
<dbReference type="GO" id="GO:0002250">
    <property type="term" value="P:adaptive immune response"/>
    <property type="evidence" value="ECO:0007669"/>
    <property type="project" value="UniProtKB-KW"/>
</dbReference>
<dbReference type="GO" id="GO:0007166">
    <property type="term" value="P:cell surface receptor signaling pathway"/>
    <property type="evidence" value="ECO:0000318"/>
    <property type="project" value="GO_Central"/>
</dbReference>
<dbReference type="CDD" id="cd05899">
    <property type="entry name" value="IgV_TCR_beta"/>
    <property type="match status" value="1"/>
</dbReference>
<dbReference type="FunFam" id="2.60.40.10:FF:002491">
    <property type="entry name" value="T cell receptor beta variable 12-4"/>
    <property type="match status" value="1"/>
</dbReference>
<dbReference type="Gene3D" id="2.60.40.10">
    <property type="entry name" value="Immunoglobulins"/>
    <property type="match status" value="1"/>
</dbReference>
<dbReference type="InterPro" id="IPR007110">
    <property type="entry name" value="Ig-like_dom"/>
</dbReference>
<dbReference type="InterPro" id="IPR036179">
    <property type="entry name" value="Ig-like_dom_sf"/>
</dbReference>
<dbReference type="InterPro" id="IPR013783">
    <property type="entry name" value="Ig-like_fold"/>
</dbReference>
<dbReference type="InterPro" id="IPR003599">
    <property type="entry name" value="Ig_sub"/>
</dbReference>
<dbReference type="InterPro" id="IPR013106">
    <property type="entry name" value="Ig_V-set"/>
</dbReference>
<dbReference type="InterPro" id="IPR050413">
    <property type="entry name" value="TCR_beta_variable"/>
</dbReference>
<dbReference type="PANTHER" id="PTHR23268:SF116">
    <property type="entry name" value="IG-LIKE DOMAIN-CONTAINING PROTEIN"/>
    <property type="match status" value="1"/>
</dbReference>
<dbReference type="PANTHER" id="PTHR23268">
    <property type="entry name" value="T-CELL RECEPTOR BETA CHAIN"/>
    <property type="match status" value="1"/>
</dbReference>
<dbReference type="Pfam" id="PF07686">
    <property type="entry name" value="V-set"/>
    <property type="match status" value="1"/>
</dbReference>
<dbReference type="SMART" id="SM00409">
    <property type="entry name" value="IG"/>
    <property type="match status" value="1"/>
</dbReference>
<dbReference type="SMART" id="SM00406">
    <property type="entry name" value="IGv"/>
    <property type="match status" value="1"/>
</dbReference>
<dbReference type="SUPFAM" id="SSF48726">
    <property type="entry name" value="Immunoglobulin"/>
    <property type="match status" value="1"/>
</dbReference>
<dbReference type="PROSITE" id="PS50835">
    <property type="entry name" value="IG_LIKE"/>
    <property type="match status" value="1"/>
</dbReference>